<proteinExistence type="inferred from homology"/>
<sequence>MNLNELRDNEGSRYRKKRLGRGIGSGKGKTSGRGVKGQKAREGVSLNGFEGGQLPLYRRMPKRGFVNIFRKEYAPVNLGAISKAIESGKLDKAATVNEEALRKAGLVNGSKLAGVRLLAHGELSHGVTIEVAGASAAALAAVEKAGGTVKVLETKKEAQADA</sequence>
<gene>
    <name evidence="1" type="primary">rplO</name>
    <name type="ordered locus">GOX0361</name>
</gene>
<evidence type="ECO:0000255" key="1">
    <source>
        <dbReference type="HAMAP-Rule" id="MF_01341"/>
    </source>
</evidence>
<evidence type="ECO:0000256" key="2">
    <source>
        <dbReference type="SAM" id="MobiDB-lite"/>
    </source>
</evidence>
<evidence type="ECO:0000305" key="3"/>
<name>RL15_GLUOX</name>
<organism>
    <name type="scientific">Gluconobacter oxydans (strain 621H)</name>
    <name type="common">Gluconobacter suboxydans</name>
    <dbReference type="NCBI Taxonomy" id="290633"/>
    <lineage>
        <taxon>Bacteria</taxon>
        <taxon>Pseudomonadati</taxon>
        <taxon>Pseudomonadota</taxon>
        <taxon>Alphaproteobacteria</taxon>
        <taxon>Acetobacterales</taxon>
        <taxon>Acetobacteraceae</taxon>
        <taxon>Gluconobacter</taxon>
    </lineage>
</organism>
<feature type="chain" id="PRO_0000251517" description="Large ribosomal subunit protein uL15">
    <location>
        <begin position="1"/>
        <end position="162"/>
    </location>
</feature>
<feature type="region of interest" description="Disordered" evidence="2">
    <location>
        <begin position="1"/>
        <end position="39"/>
    </location>
</feature>
<feature type="compositionally biased region" description="Basic and acidic residues" evidence="2">
    <location>
        <begin position="1"/>
        <end position="13"/>
    </location>
</feature>
<feature type="compositionally biased region" description="Gly residues" evidence="2">
    <location>
        <begin position="21"/>
        <end position="35"/>
    </location>
</feature>
<protein>
    <recommendedName>
        <fullName evidence="1">Large ribosomal subunit protein uL15</fullName>
    </recommendedName>
    <alternativeName>
        <fullName evidence="3">50S ribosomal protein L15</fullName>
    </alternativeName>
</protein>
<accession>Q5FU02</accession>
<dbReference type="EMBL" id="CP000009">
    <property type="protein sequence ID" value="AAW60144.1"/>
    <property type="molecule type" value="Genomic_DNA"/>
</dbReference>
<dbReference type="RefSeq" id="WP_011251947.1">
    <property type="nucleotide sequence ID" value="NZ_LT900338.1"/>
</dbReference>
<dbReference type="SMR" id="Q5FU02"/>
<dbReference type="STRING" id="290633.GOX0361"/>
<dbReference type="GeneID" id="56904627"/>
<dbReference type="KEGG" id="gox:GOX0361"/>
<dbReference type="eggNOG" id="COG0200">
    <property type="taxonomic scope" value="Bacteria"/>
</dbReference>
<dbReference type="HOGENOM" id="CLU_055188_4_0_5"/>
<dbReference type="Proteomes" id="UP000006375">
    <property type="component" value="Chromosome"/>
</dbReference>
<dbReference type="GO" id="GO:0022625">
    <property type="term" value="C:cytosolic large ribosomal subunit"/>
    <property type="evidence" value="ECO:0007669"/>
    <property type="project" value="TreeGrafter"/>
</dbReference>
<dbReference type="GO" id="GO:0019843">
    <property type="term" value="F:rRNA binding"/>
    <property type="evidence" value="ECO:0007669"/>
    <property type="project" value="UniProtKB-UniRule"/>
</dbReference>
<dbReference type="GO" id="GO:0003735">
    <property type="term" value="F:structural constituent of ribosome"/>
    <property type="evidence" value="ECO:0007669"/>
    <property type="project" value="InterPro"/>
</dbReference>
<dbReference type="GO" id="GO:0006412">
    <property type="term" value="P:translation"/>
    <property type="evidence" value="ECO:0007669"/>
    <property type="project" value="UniProtKB-UniRule"/>
</dbReference>
<dbReference type="Gene3D" id="3.100.10.10">
    <property type="match status" value="1"/>
</dbReference>
<dbReference type="HAMAP" id="MF_01341">
    <property type="entry name" value="Ribosomal_uL15"/>
    <property type="match status" value="1"/>
</dbReference>
<dbReference type="InterPro" id="IPR030878">
    <property type="entry name" value="Ribosomal_uL15"/>
</dbReference>
<dbReference type="InterPro" id="IPR021131">
    <property type="entry name" value="Ribosomal_uL15/eL18"/>
</dbReference>
<dbReference type="InterPro" id="IPR036227">
    <property type="entry name" value="Ribosomal_uL15/eL18_sf"/>
</dbReference>
<dbReference type="InterPro" id="IPR005749">
    <property type="entry name" value="Ribosomal_uL15_bac-type"/>
</dbReference>
<dbReference type="InterPro" id="IPR001196">
    <property type="entry name" value="Ribosomal_uL15_CS"/>
</dbReference>
<dbReference type="NCBIfam" id="TIGR01071">
    <property type="entry name" value="rplO_bact"/>
    <property type="match status" value="1"/>
</dbReference>
<dbReference type="PANTHER" id="PTHR12934">
    <property type="entry name" value="50S RIBOSOMAL PROTEIN L15"/>
    <property type="match status" value="1"/>
</dbReference>
<dbReference type="PANTHER" id="PTHR12934:SF11">
    <property type="entry name" value="LARGE RIBOSOMAL SUBUNIT PROTEIN UL15M"/>
    <property type="match status" value="1"/>
</dbReference>
<dbReference type="Pfam" id="PF00828">
    <property type="entry name" value="Ribosomal_L27A"/>
    <property type="match status" value="1"/>
</dbReference>
<dbReference type="SUPFAM" id="SSF52080">
    <property type="entry name" value="Ribosomal proteins L15p and L18e"/>
    <property type="match status" value="1"/>
</dbReference>
<dbReference type="PROSITE" id="PS00475">
    <property type="entry name" value="RIBOSOMAL_L15"/>
    <property type="match status" value="1"/>
</dbReference>
<comment type="function">
    <text evidence="1">Binds to the 23S rRNA.</text>
</comment>
<comment type="subunit">
    <text evidence="1">Part of the 50S ribosomal subunit.</text>
</comment>
<comment type="similarity">
    <text evidence="1">Belongs to the universal ribosomal protein uL15 family.</text>
</comment>
<keyword id="KW-1185">Reference proteome</keyword>
<keyword id="KW-0687">Ribonucleoprotein</keyword>
<keyword id="KW-0689">Ribosomal protein</keyword>
<keyword id="KW-0694">RNA-binding</keyword>
<keyword id="KW-0699">rRNA-binding</keyword>
<reference key="1">
    <citation type="journal article" date="2005" name="Nat. Biotechnol.">
        <title>Complete genome sequence of the acetic acid bacterium Gluconobacter oxydans.</title>
        <authorList>
            <person name="Prust C."/>
            <person name="Hoffmeister M."/>
            <person name="Liesegang H."/>
            <person name="Wiezer A."/>
            <person name="Fricke W.F."/>
            <person name="Ehrenreich A."/>
            <person name="Gottschalk G."/>
            <person name="Deppenmeier U."/>
        </authorList>
    </citation>
    <scope>NUCLEOTIDE SEQUENCE [LARGE SCALE GENOMIC DNA]</scope>
    <source>
        <strain>621H</strain>
    </source>
</reference>